<feature type="chain" id="PRO_0000065389" description="Gut granule loss protein 3">
    <location>
        <begin position="1"/>
        <end position="179"/>
    </location>
</feature>
<feature type="region of interest" description="Disordered" evidence="1">
    <location>
        <begin position="40"/>
        <end position="59"/>
    </location>
</feature>
<feature type="compositionally biased region" description="Polar residues" evidence="1">
    <location>
        <begin position="42"/>
        <end position="54"/>
    </location>
</feature>
<sequence length="179" mass="20121">MFGYVVVNEQNSIVFLDGNEEFKTIFQSLIQSEITSRKSDLDSASSGVGSSTCTEEQESSLDHFKKPNVVFNSSEISHILLPLILLYRSTSEKTKDPITEMSSQFGTISISKFYHNYLVLVFANDDRKRIEVSQTIEHTIATLFGPLIAFCHTDLTTVKKPKEHLACALTRKLSYSPKC</sequence>
<proteinExistence type="evidence at transcript level"/>
<evidence type="ECO:0000256" key="1">
    <source>
        <dbReference type="SAM" id="MobiDB-lite"/>
    </source>
</evidence>
<organism>
    <name type="scientific">Caenorhabditis elegans</name>
    <dbReference type="NCBI Taxonomy" id="6239"/>
    <lineage>
        <taxon>Eukaryota</taxon>
        <taxon>Metazoa</taxon>
        <taxon>Ecdysozoa</taxon>
        <taxon>Nematoda</taxon>
        <taxon>Chromadorea</taxon>
        <taxon>Rhabditida</taxon>
        <taxon>Rhabditina</taxon>
        <taxon>Rhabditomorpha</taxon>
        <taxon>Rhabditoidea</taxon>
        <taxon>Rhabditidae</taxon>
        <taxon>Peloderinae</taxon>
        <taxon>Caenorhabditis</taxon>
    </lineage>
</organism>
<name>GLO3_CAEEL</name>
<accession>Q21045</accession>
<protein>
    <recommendedName>
        <fullName>Gut granule loss protein 3</fullName>
    </recommendedName>
</protein>
<dbReference type="EMBL" id="Z50794">
    <property type="protein sequence ID" value="CAA90656.2"/>
    <property type="molecule type" value="Genomic_DNA"/>
</dbReference>
<dbReference type="EMBL" id="AF303254">
    <property type="protein sequence ID" value="AAG50212.1"/>
    <property type="molecule type" value="mRNA"/>
</dbReference>
<dbReference type="PIR" id="T23014">
    <property type="entry name" value="T23014"/>
</dbReference>
<dbReference type="BioGRID" id="51370">
    <property type="interactions" value="1"/>
</dbReference>
<dbReference type="FunCoup" id="Q21045">
    <property type="interactions" value="4"/>
</dbReference>
<dbReference type="STRING" id="6239.F59F5.2a.1"/>
<dbReference type="PaxDb" id="6239-F59F5.2a"/>
<dbReference type="UCSC" id="F59F5.2">
    <property type="organism name" value="c. elegans"/>
</dbReference>
<dbReference type="WormBase" id="F59F5.2b">
    <property type="protein sequence ID" value="CE26715"/>
    <property type="gene ID" value="WBGene00010341"/>
    <property type="gene designation" value="glo-3"/>
</dbReference>
<dbReference type="eggNOG" id="ENOG502TGG3">
    <property type="taxonomic scope" value="Eukaryota"/>
</dbReference>
<dbReference type="HOGENOM" id="CLU_1504799_0_0_1"/>
<dbReference type="InParanoid" id="Q21045"/>
<dbReference type="PRO" id="PR:Q21045"/>
<dbReference type="Proteomes" id="UP000001940">
    <property type="component" value="Chromosome X"/>
</dbReference>
<reference key="1">
    <citation type="journal article" date="1998" name="Science">
        <title>Genome sequence of the nematode C. elegans: a platform for investigating biology.</title>
        <authorList>
            <consortium name="The C. elegans sequencing consortium"/>
        </authorList>
    </citation>
    <scope>NUCLEOTIDE SEQUENCE [LARGE SCALE GENOMIC DNA]</scope>
    <source>
        <strain>Bristol N2</strain>
    </source>
</reference>
<reference key="2">
    <citation type="submission" date="2000-08" db="EMBL/GenBank/DDBJ databases">
        <title>The Caenorhabditis elegans transcriptome project, a complementary view of the genome.</title>
        <authorList>
            <person name="Kohara Y."/>
            <person name="Shin-i T."/>
            <person name="Suzuki Y."/>
            <person name="Sugano S."/>
            <person name="Potdevin M."/>
            <person name="Thierry-Mieg Y."/>
            <person name="Thierry-Mieg D."/>
            <person name="Thierry-Mieg J."/>
        </authorList>
    </citation>
    <scope>NUCLEOTIDE SEQUENCE [LARGE SCALE MRNA]</scope>
    <source>
        <strain>Bristol N2</strain>
    </source>
</reference>
<keyword id="KW-1185">Reference proteome</keyword>
<gene>
    <name type="primary">glo-3</name>
    <name type="ORF">F59F5.2</name>
</gene>